<protein>
    <recommendedName>
        <fullName>Uncharacterized protein AF_0495</fullName>
    </recommendedName>
</protein>
<gene>
    <name type="ordered locus">AF_0495</name>
</gene>
<keyword id="KW-1185">Reference proteome</keyword>
<accession>O29755</accession>
<feature type="chain" id="PRO_0000127883" description="Uncharacterized protein AF_0495">
    <location>
        <begin position="1"/>
        <end position="91"/>
    </location>
</feature>
<proteinExistence type="predicted"/>
<dbReference type="EMBL" id="AE000782">
    <property type="protein sequence ID" value="AAB90753.1"/>
    <property type="molecule type" value="Genomic_DNA"/>
</dbReference>
<dbReference type="PIR" id="G69311">
    <property type="entry name" value="G69311"/>
</dbReference>
<dbReference type="STRING" id="224325.AF_0495"/>
<dbReference type="PaxDb" id="224325-AF_0495"/>
<dbReference type="EnsemblBacteria" id="AAB90753">
    <property type="protein sequence ID" value="AAB90753"/>
    <property type="gene ID" value="AF_0495"/>
</dbReference>
<dbReference type="KEGG" id="afu:AF_0495"/>
<dbReference type="HOGENOM" id="CLU_2419854_0_0_2"/>
<dbReference type="Proteomes" id="UP000002199">
    <property type="component" value="Chromosome"/>
</dbReference>
<reference key="1">
    <citation type="journal article" date="1997" name="Nature">
        <title>The complete genome sequence of the hyperthermophilic, sulphate-reducing archaeon Archaeoglobus fulgidus.</title>
        <authorList>
            <person name="Klenk H.-P."/>
            <person name="Clayton R.A."/>
            <person name="Tomb J.-F."/>
            <person name="White O."/>
            <person name="Nelson K.E."/>
            <person name="Ketchum K.A."/>
            <person name="Dodson R.J."/>
            <person name="Gwinn M.L."/>
            <person name="Hickey E.K."/>
            <person name="Peterson J.D."/>
            <person name="Richardson D.L."/>
            <person name="Kerlavage A.R."/>
            <person name="Graham D.E."/>
            <person name="Kyrpides N.C."/>
            <person name="Fleischmann R.D."/>
            <person name="Quackenbush J."/>
            <person name="Lee N.H."/>
            <person name="Sutton G.G."/>
            <person name="Gill S.R."/>
            <person name="Kirkness E.F."/>
            <person name="Dougherty B.A."/>
            <person name="McKenney K."/>
            <person name="Adams M.D."/>
            <person name="Loftus B.J."/>
            <person name="Peterson S.N."/>
            <person name="Reich C.I."/>
            <person name="McNeil L.K."/>
            <person name="Badger J.H."/>
            <person name="Glodek A."/>
            <person name="Zhou L."/>
            <person name="Overbeek R."/>
            <person name="Gocayne J.D."/>
            <person name="Weidman J.F."/>
            <person name="McDonald L.A."/>
            <person name="Utterback T.R."/>
            <person name="Cotton M.D."/>
            <person name="Spriggs T."/>
            <person name="Artiach P."/>
            <person name="Kaine B.P."/>
            <person name="Sykes S.M."/>
            <person name="Sadow P.W."/>
            <person name="D'Andrea K.P."/>
            <person name="Bowman C."/>
            <person name="Fujii C."/>
            <person name="Garland S.A."/>
            <person name="Mason T.M."/>
            <person name="Olsen G.J."/>
            <person name="Fraser C.M."/>
            <person name="Smith H.O."/>
            <person name="Woese C.R."/>
            <person name="Venter J.C."/>
        </authorList>
    </citation>
    <scope>NUCLEOTIDE SEQUENCE [LARGE SCALE GENOMIC DNA]</scope>
    <source>
        <strain>ATCC 49558 / DSM 4304 / JCM 9628 / NBRC 100126 / VC-16</strain>
    </source>
</reference>
<organism>
    <name type="scientific">Archaeoglobus fulgidus (strain ATCC 49558 / DSM 4304 / JCM 9628 / NBRC 100126 / VC-16)</name>
    <dbReference type="NCBI Taxonomy" id="224325"/>
    <lineage>
        <taxon>Archaea</taxon>
        <taxon>Methanobacteriati</taxon>
        <taxon>Methanobacteriota</taxon>
        <taxon>Archaeoglobi</taxon>
        <taxon>Archaeoglobales</taxon>
        <taxon>Archaeoglobaceae</taxon>
        <taxon>Archaeoglobus</taxon>
    </lineage>
</organism>
<sequence>MRRRCCISYLINSRPNHAKQIVTASHFITSSFQPLTTMTCFIKPLTLNVFNLYSLVANSKYYKIDAVPCKHEANNKPRRILPVDDQPKHQP</sequence>
<name>Y495_ARCFU</name>